<keyword id="KW-0040">ANK repeat</keyword>
<keyword id="KW-0175">Coiled coil</keyword>
<keyword id="KW-1185">Reference proteome</keyword>
<keyword id="KW-0677">Repeat</keyword>
<name>A20A3_HUMAN</name>
<gene>
    <name evidence="4" type="primary">ANKRD20A3P</name>
    <name type="synonym">ANKRD20A3</name>
</gene>
<protein>
    <recommendedName>
        <fullName>Putative ankyrin repeat domain-containing protein 20A3</fullName>
    </recommendedName>
    <alternativeName>
        <fullName evidence="4">Ankyrin repeat domain-containing protein 20A3 pseudogene</fullName>
    </alternativeName>
</protein>
<dbReference type="EMBL" id="AL513478">
    <property type="status" value="NOT_ANNOTATED_CDS"/>
    <property type="molecule type" value="Genomic_DNA"/>
</dbReference>
<dbReference type="RefSeq" id="NP_001012419.1">
    <property type="nucleotide sequence ID" value="NM_001012419.2"/>
</dbReference>
<dbReference type="SMR" id="Q5VUR7"/>
<dbReference type="BioGRID" id="137457">
    <property type="interactions" value="3"/>
</dbReference>
<dbReference type="FunCoup" id="Q5VUR7">
    <property type="interactions" value="1"/>
</dbReference>
<dbReference type="IntAct" id="Q5VUR7">
    <property type="interactions" value="1"/>
</dbReference>
<dbReference type="STRING" id="9606.ENSP00000482325"/>
<dbReference type="GlyGen" id="Q5VUR7">
    <property type="glycosylation" value="2 sites, 1 O-linked glycan (2 sites)"/>
</dbReference>
<dbReference type="iPTMnet" id="Q5VUR7"/>
<dbReference type="PhosphoSitePlus" id="Q5VUR7"/>
<dbReference type="BioMuta" id="ANKRD20A3"/>
<dbReference type="DMDM" id="74747147"/>
<dbReference type="jPOST" id="Q5VUR7"/>
<dbReference type="MassIVE" id="Q5VUR7"/>
<dbReference type="PaxDb" id="9606-ENSP00000482325"/>
<dbReference type="PeptideAtlas" id="Q5VUR7"/>
<dbReference type="Antibodypedia" id="72885">
    <property type="antibodies" value="141 antibodies from 24 providers"/>
</dbReference>
<dbReference type="DNASU" id="441425"/>
<dbReference type="UCSC" id="uc033cut.1">
    <property type="organism name" value="human"/>
</dbReference>
<dbReference type="AGR" id="HGNC:31981"/>
<dbReference type="GeneCards" id="ANKRD20A3P"/>
<dbReference type="HGNC" id="HGNC:31981">
    <property type="gene designation" value="ANKRD20A3P"/>
</dbReference>
<dbReference type="neXtProt" id="NX_Q5VUR7"/>
<dbReference type="VEuPathDB" id="HostDB:ENSG00000276203"/>
<dbReference type="eggNOG" id="KOG0504">
    <property type="taxonomic scope" value="Eukaryota"/>
</dbReference>
<dbReference type="HOGENOM" id="CLU_001111_3_0_1"/>
<dbReference type="InParanoid" id="Q5VUR7"/>
<dbReference type="OrthoDB" id="6577879at2759"/>
<dbReference type="PAN-GO" id="Q5VUR7">
    <property type="GO annotations" value="0 GO annotations based on evolutionary models"/>
</dbReference>
<dbReference type="PhylomeDB" id="Q5VUR7"/>
<dbReference type="TreeFam" id="TF333496"/>
<dbReference type="PathwayCommons" id="Q5VUR7"/>
<dbReference type="BioGRID-ORCS" id="441425">
    <property type="hits" value="27 hits in 292 CRISPR screens"/>
</dbReference>
<dbReference type="GenomeRNAi" id="441425"/>
<dbReference type="Pharos" id="Q5VUR7">
    <property type="development level" value="Tdark"/>
</dbReference>
<dbReference type="Proteomes" id="UP000005640">
    <property type="component" value="Chromosome 9"/>
</dbReference>
<dbReference type="RNAct" id="Q5VUR7">
    <property type="molecule type" value="protein"/>
</dbReference>
<dbReference type="Bgee" id="ENSG00000276203">
    <property type="expression patterns" value="Expressed in male germ line stem cell (sensu Vertebrata) in testis and 98 other cell types or tissues"/>
</dbReference>
<dbReference type="ExpressionAtlas" id="Q5VUR7">
    <property type="expression patterns" value="baseline and differential"/>
</dbReference>
<dbReference type="FunFam" id="1.25.40.20:FF:000518">
    <property type="entry name" value="Ankyrin repeat domain-containing protein 20A1"/>
    <property type="match status" value="1"/>
</dbReference>
<dbReference type="FunFam" id="1.25.40.20:FF:000208">
    <property type="entry name" value="Ankyrin repeat domain-containing protein 26"/>
    <property type="match status" value="1"/>
</dbReference>
<dbReference type="Gene3D" id="1.25.40.20">
    <property type="entry name" value="Ankyrin repeat-containing domain"/>
    <property type="match status" value="2"/>
</dbReference>
<dbReference type="InterPro" id="IPR050657">
    <property type="entry name" value="Ankyrin_repeat_domain"/>
</dbReference>
<dbReference type="InterPro" id="IPR002110">
    <property type="entry name" value="Ankyrin_rpt"/>
</dbReference>
<dbReference type="InterPro" id="IPR036770">
    <property type="entry name" value="Ankyrin_rpt-contain_sf"/>
</dbReference>
<dbReference type="InterPro" id="IPR039497">
    <property type="entry name" value="CC144C-like_CC_dom"/>
</dbReference>
<dbReference type="PANTHER" id="PTHR24147">
    <property type="entry name" value="ANKYRIN REPEAT DOMAIN 36-RELATED"/>
    <property type="match status" value="1"/>
</dbReference>
<dbReference type="PANTHER" id="PTHR24147:SF1">
    <property type="entry name" value="ANKYRIN REPEAT DOMAIN-CONTAINING PROTEIN 20A1-RELATED"/>
    <property type="match status" value="1"/>
</dbReference>
<dbReference type="Pfam" id="PF00023">
    <property type="entry name" value="Ank"/>
    <property type="match status" value="3"/>
</dbReference>
<dbReference type="Pfam" id="PF12796">
    <property type="entry name" value="Ank_2"/>
    <property type="match status" value="1"/>
</dbReference>
<dbReference type="Pfam" id="PF14915">
    <property type="entry name" value="CCDC144C"/>
    <property type="match status" value="2"/>
</dbReference>
<dbReference type="PRINTS" id="PR01415">
    <property type="entry name" value="ANKYRIN"/>
</dbReference>
<dbReference type="SMART" id="SM00248">
    <property type="entry name" value="ANK"/>
    <property type="match status" value="6"/>
</dbReference>
<dbReference type="SUPFAM" id="SSF48403">
    <property type="entry name" value="Ankyrin repeat"/>
    <property type="match status" value="1"/>
</dbReference>
<dbReference type="PROSITE" id="PS50297">
    <property type="entry name" value="ANK_REP_REGION"/>
    <property type="match status" value="1"/>
</dbReference>
<dbReference type="PROSITE" id="PS50088">
    <property type="entry name" value="ANK_REPEAT"/>
    <property type="match status" value="4"/>
</dbReference>
<proteinExistence type="uncertain"/>
<organism>
    <name type="scientific">Homo sapiens</name>
    <name type="common">Human</name>
    <dbReference type="NCBI Taxonomy" id="9606"/>
    <lineage>
        <taxon>Eukaryota</taxon>
        <taxon>Metazoa</taxon>
        <taxon>Chordata</taxon>
        <taxon>Craniata</taxon>
        <taxon>Vertebrata</taxon>
        <taxon>Euteleostomi</taxon>
        <taxon>Mammalia</taxon>
        <taxon>Eutheria</taxon>
        <taxon>Euarchontoglires</taxon>
        <taxon>Primates</taxon>
        <taxon>Haplorrhini</taxon>
        <taxon>Catarrhini</taxon>
        <taxon>Hominidae</taxon>
        <taxon>Homo</taxon>
    </lineage>
</organism>
<feature type="chain" id="PRO_0000240836" description="Putative ankyrin repeat domain-containing protein 20A3">
    <location>
        <begin position="1"/>
        <end position="823"/>
    </location>
</feature>
<feature type="repeat" description="ANK 1">
    <location>
        <begin position="66"/>
        <end position="95"/>
    </location>
</feature>
<feature type="repeat" description="ANK 2">
    <location>
        <begin position="99"/>
        <end position="128"/>
    </location>
</feature>
<feature type="repeat" description="ANK 3">
    <location>
        <begin position="132"/>
        <end position="161"/>
    </location>
</feature>
<feature type="repeat" description="ANK 4">
    <location>
        <begin position="165"/>
        <end position="194"/>
    </location>
</feature>
<feature type="repeat" description="ANK 5">
    <location>
        <begin position="198"/>
        <end position="227"/>
    </location>
</feature>
<feature type="region of interest" description="Disordered" evidence="2">
    <location>
        <begin position="301"/>
        <end position="343"/>
    </location>
</feature>
<feature type="region of interest" description="Disordered" evidence="2">
    <location>
        <begin position="355"/>
        <end position="402"/>
    </location>
</feature>
<feature type="coiled-coil region" evidence="1">
    <location>
        <begin position="431"/>
        <end position="480"/>
    </location>
</feature>
<feature type="coiled-coil region" evidence="1">
    <location>
        <begin position="571"/>
        <end position="724"/>
    </location>
</feature>
<feature type="coiled-coil region" evidence="1">
    <location>
        <begin position="776"/>
        <end position="805"/>
    </location>
</feature>
<feature type="compositionally biased region" description="Basic and acidic residues" evidence="2">
    <location>
        <begin position="372"/>
        <end position="384"/>
    </location>
</feature>
<comment type="caution">
    <text evidence="3">Could be the product of a pseudogene.</text>
</comment>
<evidence type="ECO:0000255" key="1"/>
<evidence type="ECO:0000256" key="2">
    <source>
        <dbReference type="SAM" id="MobiDB-lite"/>
    </source>
</evidence>
<evidence type="ECO:0000305" key="3"/>
<evidence type="ECO:0000312" key="4">
    <source>
        <dbReference type="HGNC" id="HGNC:31981"/>
    </source>
</evidence>
<sequence length="823" mass="94108">MKLFGFGSRRGQTAQGSIDHVYTGSGYRIRDSELQKIHRAAVKGDAAEVERCLARRSGDLDALDKQHRTALHLACASGHVQVVTLLVNRKCQIDVCDKENRTPLIQAVHCQEEACAVILLEHGANPNLKDIYGNTALHYAVYSESTSLAEKLLSHGAHIEALDKDNNTPLLFAIICKKEKMVEFLLKRKASSHAVDRLRRSALMLAVYYDSPGIVNILLKQNIDVFAQDMCGRDAEDYAISHHLTKIQQQILEHKKKILKKEKSDVGSSDESAVSIFHELRVDSLPASDDKDLNVATKQCVPEKVSEPLPGSSHEKGNRIVNGQGEGPPAKHPSLKPSTEVEDPAVKGAVQRKNVQTLRAEQALPVASEEEQERHERSEKKQPQVKEGNNTNKSEKIQLSENICDSTSSAAAGRLTQQRKIGKTYPQQFPKKLKEEHDRCTLKQENEEKTNVNMLYKKNREELERKEKQYKKEVEAKQLEPTVQSLEMKSKTARNTPNRDFHNHEEMKGLMDENCILKADIAILRQEICTMKNDNLEKENKYLKDIKIVKETNAALEKYIKLNEEMITETAFRYQQELNYLKAENTRLNAELLKEKESKKRLEADIESYQSRLAAAISKHSESVKTERNLKLALERTRDVSVQVEMSSAISKVKDENEFLTEQLSETQIKFNALKDKFRKTRDSLRKKSLALETVQNDLSQTQQQTQEMKEMYQNAEAKVNNSTGKWNCVEERICHLQRENAWLVQQLDDVHQKEDHKEIVTNIQRGFIESGKKDLVLEEKSKKLMNECDHLKESLFQYEREKTEGVVSIKEDKYFQTSRKTI</sequence>
<accession>Q5VUR7</accession>
<reference key="1">
    <citation type="journal article" date="2004" name="Nature">
        <title>DNA sequence and analysis of human chromosome 9.</title>
        <authorList>
            <person name="Humphray S.J."/>
            <person name="Oliver K."/>
            <person name="Hunt A.R."/>
            <person name="Plumb R.W."/>
            <person name="Loveland J.E."/>
            <person name="Howe K.L."/>
            <person name="Andrews T.D."/>
            <person name="Searle S."/>
            <person name="Hunt S.E."/>
            <person name="Scott C.E."/>
            <person name="Jones M.C."/>
            <person name="Ainscough R."/>
            <person name="Almeida J.P."/>
            <person name="Ambrose K.D."/>
            <person name="Ashwell R.I.S."/>
            <person name="Babbage A.K."/>
            <person name="Babbage S."/>
            <person name="Bagguley C.L."/>
            <person name="Bailey J."/>
            <person name="Banerjee R."/>
            <person name="Barker D.J."/>
            <person name="Barlow K.F."/>
            <person name="Bates K."/>
            <person name="Beasley H."/>
            <person name="Beasley O."/>
            <person name="Bird C.P."/>
            <person name="Bray-Allen S."/>
            <person name="Brown A.J."/>
            <person name="Brown J.Y."/>
            <person name="Burford D."/>
            <person name="Burrill W."/>
            <person name="Burton J."/>
            <person name="Carder C."/>
            <person name="Carter N.P."/>
            <person name="Chapman J.C."/>
            <person name="Chen Y."/>
            <person name="Clarke G."/>
            <person name="Clark S.Y."/>
            <person name="Clee C.M."/>
            <person name="Clegg S."/>
            <person name="Collier R.E."/>
            <person name="Corby N."/>
            <person name="Crosier M."/>
            <person name="Cummings A.T."/>
            <person name="Davies J."/>
            <person name="Dhami P."/>
            <person name="Dunn M."/>
            <person name="Dutta I."/>
            <person name="Dyer L.W."/>
            <person name="Earthrowl M.E."/>
            <person name="Faulkner L."/>
            <person name="Fleming C.J."/>
            <person name="Frankish A."/>
            <person name="Frankland J.A."/>
            <person name="French L."/>
            <person name="Fricker D.G."/>
            <person name="Garner P."/>
            <person name="Garnett J."/>
            <person name="Ghori J."/>
            <person name="Gilbert J.G.R."/>
            <person name="Glison C."/>
            <person name="Grafham D.V."/>
            <person name="Gribble S."/>
            <person name="Griffiths C."/>
            <person name="Griffiths-Jones S."/>
            <person name="Grocock R."/>
            <person name="Guy J."/>
            <person name="Hall R.E."/>
            <person name="Hammond S."/>
            <person name="Harley J.L."/>
            <person name="Harrison E.S.I."/>
            <person name="Hart E.A."/>
            <person name="Heath P.D."/>
            <person name="Henderson C.D."/>
            <person name="Hopkins B.L."/>
            <person name="Howard P.J."/>
            <person name="Howden P.J."/>
            <person name="Huckle E."/>
            <person name="Johnson C."/>
            <person name="Johnson D."/>
            <person name="Joy A.A."/>
            <person name="Kay M."/>
            <person name="Keenan S."/>
            <person name="Kershaw J.K."/>
            <person name="Kimberley A.M."/>
            <person name="King A."/>
            <person name="Knights A."/>
            <person name="Laird G.K."/>
            <person name="Langford C."/>
            <person name="Lawlor S."/>
            <person name="Leongamornlert D.A."/>
            <person name="Leversha M."/>
            <person name="Lloyd C."/>
            <person name="Lloyd D.M."/>
            <person name="Lovell J."/>
            <person name="Martin S."/>
            <person name="Mashreghi-Mohammadi M."/>
            <person name="Matthews L."/>
            <person name="McLaren S."/>
            <person name="McLay K.E."/>
            <person name="McMurray A."/>
            <person name="Milne S."/>
            <person name="Nickerson T."/>
            <person name="Nisbett J."/>
            <person name="Nordsiek G."/>
            <person name="Pearce A.V."/>
            <person name="Peck A.I."/>
            <person name="Porter K.M."/>
            <person name="Pandian R."/>
            <person name="Pelan S."/>
            <person name="Phillimore B."/>
            <person name="Povey S."/>
            <person name="Ramsey Y."/>
            <person name="Rand V."/>
            <person name="Scharfe M."/>
            <person name="Sehra H.K."/>
            <person name="Shownkeen R."/>
            <person name="Sims S.K."/>
            <person name="Skuce C.D."/>
            <person name="Smith M."/>
            <person name="Steward C.A."/>
            <person name="Swarbreck D."/>
            <person name="Sycamore N."/>
            <person name="Tester J."/>
            <person name="Thorpe A."/>
            <person name="Tracey A."/>
            <person name="Tromans A."/>
            <person name="Thomas D.W."/>
            <person name="Wall M."/>
            <person name="Wallis J.M."/>
            <person name="West A.P."/>
            <person name="Whitehead S.L."/>
            <person name="Willey D.L."/>
            <person name="Williams S.A."/>
            <person name="Wilming L."/>
            <person name="Wray P.W."/>
            <person name="Young L."/>
            <person name="Ashurst J.L."/>
            <person name="Coulson A."/>
            <person name="Blocker H."/>
            <person name="Durbin R.M."/>
            <person name="Sulston J.E."/>
            <person name="Hubbard T."/>
            <person name="Jackson M.J."/>
            <person name="Bentley D.R."/>
            <person name="Beck S."/>
            <person name="Rogers J."/>
            <person name="Dunham I."/>
        </authorList>
    </citation>
    <scope>NUCLEOTIDE SEQUENCE [LARGE SCALE GENOMIC DNA]</scope>
</reference>